<feature type="chain" id="PRO_0000104676" description="Large ribosomal subunit protein uL15">
    <location>
        <begin position="1"/>
        <end position="148"/>
    </location>
</feature>
<feature type="region of interest" description="Disordered" evidence="2">
    <location>
        <begin position="1"/>
        <end position="50"/>
    </location>
</feature>
<feature type="compositionally biased region" description="Gly residues" evidence="2">
    <location>
        <begin position="21"/>
        <end position="31"/>
    </location>
</feature>
<protein>
    <recommendedName>
        <fullName evidence="1">Large ribosomal subunit protein uL15</fullName>
    </recommendedName>
    <alternativeName>
        <fullName evidence="3">50S ribosomal protein L15</fullName>
    </alternativeName>
</protein>
<organism>
    <name type="scientific">Bacteroides fragilis (strain YCH46)</name>
    <dbReference type="NCBI Taxonomy" id="295405"/>
    <lineage>
        <taxon>Bacteria</taxon>
        <taxon>Pseudomonadati</taxon>
        <taxon>Bacteroidota</taxon>
        <taxon>Bacteroidia</taxon>
        <taxon>Bacteroidales</taxon>
        <taxon>Bacteroidaceae</taxon>
        <taxon>Bacteroides</taxon>
    </lineage>
</organism>
<name>RL15_BACFR</name>
<gene>
    <name evidence="1" type="primary">rplO</name>
    <name type="ordered locus">BF4162</name>
</gene>
<accession>Q64NM7</accession>
<comment type="function">
    <text evidence="1">Binds to the 23S rRNA.</text>
</comment>
<comment type="subunit">
    <text evidence="1">Part of the 50S ribosomal subunit.</text>
</comment>
<comment type="similarity">
    <text evidence="1">Belongs to the universal ribosomal protein uL15 family.</text>
</comment>
<evidence type="ECO:0000255" key="1">
    <source>
        <dbReference type="HAMAP-Rule" id="MF_01341"/>
    </source>
</evidence>
<evidence type="ECO:0000256" key="2">
    <source>
        <dbReference type="SAM" id="MobiDB-lite"/>
    </source>
</evidence>
<evidence type="ECO:0000305" key="3"/>
<reference key="1">
    <citation type="journal article" date="2004" name="Proc. Natl. Acad. Sci. U.S.A.">
        <title>Genomic analysis of Bacteroides fragilis reveals extensive DNA inversions regulating cell surface adaptation.</title>
        <authorList>
            <person name="Kuwahara T."/>
            <person name="Yamashita A."/>
            <person name="Hirakawa H."/>
            <person name="Nakayama H."/>
            <person name="Toh H."/>
            <person name="Okada N."/>
            <person name="Kuhara S."/>
            <person name="Hattori M."/>
            <person name="Hayashi T."/>
            <person name="Ohnishi Y."/>
        </authorList>
    </citation>
    <scope>NUCLEOTIDE SEQUENCE [LARGE SCALE GENOMIC DNA]</scope>
    <source>
        <strain>YCH46</strain>
    </source>
</reference>
<keyword id="KW-0687">Ribonucleoprotein</keyword>
<keyword id="KW-0689">Ribosomal protein</keyword>
<keyword id="KW-0694">RNA-binding</keyword>
<keyword id="KW-0699">rRNA-binding</keyword>
<dbReference type="EMBL" id="AP006841">
    <property type="protein sequence ID" value="BAD50905.1"/>
    <property type="molecule type" value="Genomic_DNA"/>
</dbReference>
<dbReference type="RefSeq" id="WP_005804135.1">
    <property type="nucleotide sequence ID" value="NZ_UYXF01000007.1"/>
</dbReference>
<dbReference type="RefSeq" id="YP_101439.1">
    <property type="nucleotide sequence ID" value="NC_006347.1"/>
</dbReference>
<dbReference type="SMR" id="Q64NM7"/>
<dbReference type="STRING" id="295405.BF4162"/>
<dbReference type="GeneID" id="60370041"/>
<dbReference type="KEGG" id="bfr:BF4162"/>
<dbReference type="PATRIC" id="fig|295405.11.peg.4016"/>
<dbReference type="HOGENOM" id="CLU_055188_4_2_10"/>
<dbReference type="OrthoDB" id="9810293at2"/>
<dbReference type="Proteomes" id="UP000002197">
    <property type="component" value="Chromosome"/>
</dbReference>
<dbReference type="GO" id="GO:0022625">
    <property type="term" value="C:cytosolic large ribosomal subunit"/>
    <property type="evidence" value="ECO:0007669"/>
    <property type="project" value="TreeGrafter"/>
</dbReference>
<dbReference type="GO" id="GO:0019843">
    <property type="term" value="F:rRNA binding"/>
    <property type="evidence" value="ECO:0007669"/>
    <property type="project" value="UniProtKB-UniRule"/>
</dbReference>
<dbReference type="GO" id="GO:0003735">
    <property type="term" value="F:structural constituent of ribosome"/>
    <property type="evidence" value="ECO:0007669"/>
    <property type="project" value="InterPro"/>
</dbReference>
<dbReference type="GO" id="GO:0006412">
    <property type="term" value="P:translation"/>
    <property type="evidence" value="ECO:0007669"/>
    <property type="project" value="UniProtKB-UniRule"/>
</dbReference>
<dbReference type="Gene3D" id="3.100.10.10">
    <property type="match status" value="1"/>
</dbReference>
<dbReference type="HAMAP" id="MF_01341">
    <property type="entry name" value="Ribosomal_uL15"/>
    <property type="match status" value="1"/>
</dbReference>
<dbReference type="InterPro" id="IPR030878">
    <property type="entry name" value="Ribosomal_uL15"/>
</dbReference>
<dbReference type="InterPro" id="IPR021131">
    <property type="entry name" value="Ribosomal_uL15/eL18"/>
</dbReference>
<dbReference type="InterPro" id="IPR036227">
    <property type="entry name" value="Ribosomal_uL15/eL18_sf"/>
</dbReference>
<dbReference type="InterPro" id="IPR005749">
    <property type="entry name" value="Ribosomal_uL15_bac-type"/>
</dbReference>
<dbReference type="InterPro" id="IPR001196">
    <property type="entry name" value="Ribosomal_uL15_CS"/>
</dbReference>
<dbReference type="NCBIfam" id="TIGR01071">
    <property type="entry name" value="rplO_bact"/>
    <property type="match status" value="1"/>
</dbReference>
<dbReference type="PANTHER" id="PTHR12934">
    <property type="entry name" value="50S RIBOSOMAL PROTEIN L15"/>
    <property type="match status" value="1"/>
</dbReference>
<dbReference type="PANTHER" id="PTHR12934:SF11">
    <property type="entry name" value="LARGE RIBOSOMAL SUBUNIT PROTEIN UL15M"/>
    <property type="match status" value="1"/>
</dbReference>
<dbReference type="Pfam" id="PF00828">
    <property type="entry name" value="Ribosomal_L27A"/>
    <property type="match status" value="1"/>
</dbReference>
<dbReference type="SUPFAM" id="SSF52080">
    <property type="entry name" value="Ribosomal proteins L15p and L18e"/>
    <property type="match status" value="1"/>
</dbReference>
<dbReference type="PROSITE" id="PS00475">
    <property type="entry name" value="RIBOSOMAL_L15"/>
    <property type="match status" value="1"/>
</dbReference>
<sequence>MNLSNLKPAEGSTKTRKRIGRGPGSGLGGTSTRGHKGAKSRSGYSKKIGFEGGQMPLQRRVPKFGFKNINRIEYKAINLETIQKLAEAKKLEKVGVNDFIEAGFISSSQLVKVLGNGTLTAKLSVEAHAFSKSAVAAIEAAGGNVVKL</sequence>
<proteinExistence type="inferred from homology"/>